<comment type="function">
    <molecule>Cyphokinin</molecule>
    <text evidence="2">Inhibits angiotensin-converting enzyme (ACE) with a Ki of 2.2 uM and targets B2 bradykinin receptor (BDKRB2). Also provokes contraction of smooth muscle preparation (ileum). In vivo, induces hyperalgesic effects in living rats after intraplantar injection.</text>
</comment>
<comment type="function">
    <molecule>Thr6-bradykinin</molecule>
    <text evidence="2">Inhibits ACE with a Ki of 1.6 uM, and targets B2 bradykinin receptor (BDKRB2). Provokes contraction of smooth muscle preparation (ileum). In vivo, induces an early hyperalgesic effects in living rats after intraplantar injection.</text>
</comment>
<comment type="subcellular location">
    <subcellularLocation>
        <location evidence="1">Secreted</location>
    </subcellularLocation>
</comment>
<comment type="tissue specificity">
    <text evidence="1">Expressed by the venom gland.</text>
</comment>
<comment type="mass spectrometry" mass="1290.6" method="MALDI" evidence="2">
    <molecule>Cyphokinin</molecule>
    <text>Monoisotopic mass.</text>
</comment>
<comment type="mass spectrometry" mass="1074.58" method="MALDI" evidence="1">
    <molecule>Thr6-bradykinin</molecule>
</comment>
<comment type="miscellaneous">
    <text evidence="6">Cyphokinin is hydrolyzed by ACE by only 27.3% (compared to bradykinin).</text>
</comment>
<comment type="miscellaneous">
    <text evidence="6">[Thr6]-bradykinin is hydrolyzed by ACE by only 22.7% (compared to bradykinin).</text>
</comment>
<comment type="similarity">
    <text evidence="5">Belongs to the bradykinin-related peptide family.</text>
</comment>
<dbReference type="GO" id="GO:0005615">
    <property type="term" value="C:extracellular space"/>
    <property type="evidence" value="ECO:0000314"/>
    <property type="project" value="UniProtKB"/>
</dbReference>
<dbReference type="GO" id="GO:0005179">
    <property type="term" value="F:hormone activity"/>
    <property type="evidence" value="ECO:0007669"/>
    <property type="project" value="InterPro"/>
</dbReference>
<dbReference type="GO" id="GO:0090729">
    <property type="term" value="F:toxin activity"/>
    <property type="evidence" value="ECO:0007669"/>
    <property type="project" value="UniProtKB-KW"/>
</dbReference>
<dbReference type="GO" id="GO:0006952">
    <property type="term" value="P:defense response"/>
    <property type="evidence" value="ECO:0007669"/>
    <property type="project" value="InterPro"/>
</dbReference>
<dbReference type="GO" id="GO:0045776">
    <property type="term" value="P:negative regulation of blood pressure"/>
    <property type="evidence" value="ECO:0000250"/>
    <property type="project" value="UniProtKB"/>
</dbReference>
<dbReference type="GO" id="GO:0045987">
    <property type="term" value="P:positive regulation of smooth muscle contraction"/>
    <property type="evidence" value="ECO:0000250"/>
    <property type="project" value="UniProtKB"/>
</dbReference>
<dbReference type="InterPro" id="IPR009608">
    <property type="entry name" value="Bradykinin"/>
</dbReference>
<dbReference type="Pfam" id="PF06753">
    <property type="entry name" value="Bradykinin"/>
    <property type="match status" value="1"/>
</dbReference>
<reference key="1">
    <citation type="journal article" date="2010" name="Biochem. Pharmacol.">
        <title>Bradykinin-related peptides in the venom of the solitary wasp Cyphononyx fulvognathus.</title>
        <authorList>
            <person name="Picolo G."/>
            <person name="Hisada M."/>
            <person name="Moura A.B."/>
            <person name="Machado M.F."/>
            <person name="Sciani J.M."/>
            <person name="Conceicao I.M."/>
            <person name="Melo R.L."/>
            <person name="Oliveira V."/>
            <person name="Lima-Landman M.T."/>
            <person name="Cury Y."/>
            <person name="Konno K."/>
            <person name="Hayashi M.A."/>
        </authorList>
    </citation>
    <scope>PROTEIN SEQUENCE</scope>
    <scope>SYNTHESIS</scope>
    <scope>FUNCTION</scope>
    <scope>BIOASSAY</scope>
    <scope>MASS SPECTROMETRY</scope>
    <source>
        <tissue>Venom</tissue>
    </source>
</reference>
<reference key="2">
    <citation type="journal article" date="2001" name="Toxicon">
        <title>Isolation and sequence determination of peptides in the venom of the spider wasp (Cyphononyx dorsalis) guided by matrix-assisted laser desorption/ionization time of flight (MALDI-TOF) mass spectrometry.</title>
        <authorList>
            <person name="Konno K."/>
            <person name="Hisada M."/>
            <person name="Naoki H."/>
            <person name="Itagaki Y."/>
            <person name="Yasuhara T."/>
            <person name="Juliano M.A."/>
            <person name="Juliano L."/>
            <person name="Palma M.S."/>
            <person name="Yamane T."/>
            <person name="Nakajima T."/>
        </authorList>
    </citation>
    <scope>PROTEIN SEQUENCE OF 3-11</scope>
    <scope>SUBCELLULAR LOCATION</scope>
    <scope>MASS SPECTROMETRY</scope>
    <source>
        <tissue>Venom</tissue>
    </source>
</reference>
<reference key="3">
    <citation type="journal article" date="2016" name="Toxins">
        <title>Peptide toxins in solitary wasp venoms.</title>
        <authorList>
            <person name="Konno K."/>
            <person name="Kazuma K."/>
            <person name="Nihei K."/>
        </authorList>
    </citation>
    <scope>REVIEW</scope>
</reference>
<accession>P83659</accession>
<organism>
    <name type="scientific">Cyphononyx dorsalis</name>
    <name type="common">Spider wasp</name>
    <name type="synonym">Cyphononyx fulvognathus</name>
    <dbReference type="NCBI Taxonomy" id="246266"/>
    <lineage>
        <taxon>Eukaryota</taxon>
        <taxon>Metazoa</taxon>
        <taxon>Ecdysozoa</taxon>
        <taxon>Arthropoda</taxon>
        <taxon>Hexapoda</taxon>
        <taxon>Insecta</taxon>
        <taxon>Pterygota</taxon>
        <taxon>Neoptera</taxon>
        <taxon>Endopterygota</taxon>
        <taxon>Hymenoptera</taxon>
        <taxon>Apocrita</taxon>
        <taxon>Aculeata</taxon>
        <taxon>Pompiloidea</taxon>
        <taxon>Pompilidae</taxon>
        <taxon>Pepsinae</taxon>
        <taxon>Cyphononyx</taxon>
    </lineage>
</organism>
<proteinExistence type="evidence at protein level"/>
<evidence type="ECO:0000269" key="1">
    <source>
    </source>
</evidence>
<evidence type="ECO:0000269" key="2">
    <source>
    </source>
</evidence>
<evidence type="ECO:0000303" key="3">
    <source>
    </source>
</evidence>
<evidence type="ECO:0000303" key="4">
    <source>
    </source>
</evidence>
<evidence type="ECO:0000305" key="5"/>
<evidence type="ECO:0000305" key="6">
    <source>
    </source>
</evidence>
<sequence length="11" mass="1290">DTRPPGFTPFR</sequence>
<name>BRKC_CYPDO</name>
<keyword id="KW-1222">Bradykinin receptor impairing toxin</keyword>
<keyword id="KW-0903">Direct protein sequencing</keyword>
<keyword id="KW-1213">G-protein coupled receptor impairing toxin</keyword>
<keyword id="KW-0964">Secreted</keyword>
<keyword id="KW-0800">Toxin</keyword>
<feature type="peptide" id="PRO_0000424140" description="Cyphokinin" evidence="2">
    <location>
        <begin position="1"/>
        <end position="11"/>
    </location>
</feature>
<feature type="peptide" id="PRO_0000043521" description="Thr6-bradykinin" evidence="1">
    <location>
        <begin position="3"/>
        <end position="11"/>
    </location>
</feature>
<protein>
    <recommendedName>
        <fullName evidence="4">Cyphokinin</fullName>
    </recommendedName>
    <alternativeName>
        <fullName evidence="4">Bradykinin-related peptide</fullName>
    </alternativeName>
    <component>
        <recommendedName>
            <fullName evidence="3 4">Thr6-bradykinin</fullName>
            <shortName evidence="3 4">Thr6-BK</shortName>
        </recommendedName>
    </component>
</protein>